<geneLocation type="chloroplast"/>
<keyword id="KW-0150">Chloroplast</keyword>
<keyword id="KW-0934">Plastid</keyword>
<feature type="chain" id="PRO_0000217450" description="Uncharacterized 8.1 kDa protein in ndhF-psbD intergenic region">
    <location>
        <begin position="1"/>
        <end position="71"/>
    </location>
</feature>
<accession>Q9MUR2</accession>
<comment type="subcellular location">
    <subcellularLocation>
        <location>Plastid</location>
        <location>Chloroplast</location>
    </subcellularLocation>
</comment>
<dbReference type="EMBL" id="AF166114">
    <property type="protein sequence ID" value="AAF43891.1"/>
    <property type="molecule type" value="Genomic_DNA"/>
</dbReference>
<dbReference type="RefSeq" id="NP_038398.1">
    <property type="nucleotide sequence ID" value="NC_002186.1"/>
</dbReference>
<dbReference type="GeneID" id="1403688"/>
<dbReference type="GO" id="GO:0009507">
    <property type="term" value="C:chloroplast"/>
    <property type="evidence" value="ECO:0007669"/>
    <property type="project" value="UniProtKB-SubCell"/>
</dbReference>
<name>YCX4_MESVI</name>
<organism>
    <name type="scientific">Mesostigma viride</name>
    <name type="common">Green alga</name>
    <dbReference type="NCBI Taxonomy" id="41882"/>
    <lineage>
        <taxon>Eukaryota</taxon>
        <taxon>Viridiplantae</taxon>
        <taxon>Streptophyta</taxon>
        <taxon>Mesostigmatophyceae</taxon>
        <taxon>Mesostigmatales</taxon>
        <taxon>Mesostigmataceae</taxon>
        <taxon>Mesostigma</taxon>
    </lineage>
</organism>
<sequence length="71" mass="8147">MSPIIINSVRLISSLLTIVFIMLPKVDTFSKIMKNKKILLNWQENISTLSIIKWISIILFLSSHCALFITL</sequence>
<proteinExistence type="predicted"/>
<reference key="1">
    <citation type="journal article" date="2000" name="Nature">
        <title>Ancestral chloroplast genome in Mesostigma viride reveals an early branch of green plant evolution.</title>
        <authorList>
            <person name="Lemieux C."/>
            <person name="Otis C."/>
            <person name="Turmel M."/>
        </authorList>
    </citation>
    <scope>NUCLEOTIDE SEQUENCE [LARGE SCALE GENOMIC DNA]</scope>
    <source>
        <strain>NIES-296 / KY-14 / CCMP 2046</strain>
    </source>
</reference>
<protein>
    <recommendedName>
        <fullName>Uncharacterized 8.1 kDa protein in ndhF-psbD intergenic region</fullName>
    </recommendedName>
</protein>